<feature type="chain" id="PRO_0000419093" description="Signal peptide peptidase-like 1">
    <location>
        <begin position="1"/>
        <end position="372"/>
    </location>
</feature>
<feature type="topological domain" description="Lumenal" evidence="2">
    <location>
        <begin position="1"/>
        <end position="6"/>
    </location>
</feature>
<feature type="transmembrane region" description="Helical" evidence="2">
    <location>
        <begin position="7"/>
        <end position="27"/>
    </location>
</feature>
<feature type="topological domain" description="Cytoplasmic" evidence="2">
    <location>
        <begin position="28"/>
        <end position="54"/>
    </location>
</feature>
<feature type="transmembrane region" description="Helical" evidence="2">
    <location>
        <begin position="55"/>
        <end position="77"/>
    </location>
</feature>
<feature type="topological domain" description="Lumenal" evidence="2">
    <location>
        <begin position="78"/>
        <end position="81"/>
    </location>
</feature>
<feature type="transmembrane region" description="Helical" evidence="2">
    <location>
        <begin position="82"/>
        <end position="104"/>
    </location>
</feature>
<feature type="topological domain" description="Cytoplasmic" evidence="2">
    <location>
        <begin position="105"/>
        <end position="123"/>
    </location>
</feature>
<feature type="transmembrane region" description="Helical" evidence="2">
    <location>
        <begin position="124"/>
        <end position="146"/>
    </location>
</feature>
<feature type="topological domain" description="Lumenal" evidence="2">
    <location>
        <begin position="147"/>
        <end position="149"/>
    </location>
</feature>
<feature type="transmembrane region" description="Helical" evidence="2">
    <location>
        <begin position="150"/>
        <end position="167"/>
    </location>
</feature>
<feature type="topological domain" description="Cytoplasmic" evidence="2">
    <location>
        <begin position="168"/>
        <end position="171"/>
    </location>
</feature>
<feature type="transmembrane region" description="Helical" evidence="2">
    <location>
        <begin position="172"/>
        <end position="192"/>
    </location>
</feature>
<feature type="topological domain" description="Lumenal" evidence="2">
    <location>
        <begin position="193"/>
        <end position="257"/>
    </location>
</feature>
<feature type="transmembrane region" description="Helical" evidence="2">
    <location>
        <begin position="258"/>
        <end position="278"/>
    </location>
</feature>
<feature type="topological domain" description="Cytoplasmic" evidence="2">
    <location>
        <begin position="279"/>
        <end position="301"/>
    </location>
</feature>
<feature type="transmembrane region" description="Helical" evidence="2">
    <location>
        <begin position="302"/>
        <end position="322"/>
    </location>
</feature>
<feature type="topological domain" description="Lumenal" evidence="2">
    <location>
        <begin position="323"/>
        <end position="325"/>
    </location>
</feature>
<feature type="transmembrane region" description="Helical" evidence="2">
    <location>
        <begin position="326"/>
        <end position="346"/>
    </location>
</feature>
<feature type="topological domain" description="Cytoplasmic" evidence="2">
    <location>
        <begin position="347"/>
        <end position="372"/>
    </location>
</feature>
<feature type="short sequence motif" description="PAL">
    <location>
        <begin position="328"/>
        <end position="330"/>
    </location>
</feature>
<feature type="active site" evidence="1">
    <location>
        <position position="186"/>
    </location>
</feature>
<feature type="active site" evidence="1">
    <location>
        <position position="265"/>
    </location>
</feature>
<proteinExistence type="evidence at transcript level"/>
<protein>
    <recommendedName>
        <fullName>Signal peptide peptidase-like 1</fullName>
        <shortName>AtSPPL1</shortName>
        <ecNumber>3.4.23.-</ecNumber>
    </recommendedName>
</protein>
<sequence length="372" mass="41002">METLWTLLYLLEPAPATLIVTAVTVTFASAFRALNYGKEMERNRDFSEASITLDSSQALMIPVMSSCSLLLMFYLFSSVSQLLTAFTAIASVSSLFYWLSPYAVYMKTQLGLSDPFLSRCCSKSFTRIQGLLLVACAMTVVAWLISGHWVLNNLLGISICIAFVSHVRLPNIKICAMLLVCLFVYDIFWVFFSERFFGANVMVAVATQQASNPVHTVANSLNLPGLQLITKKLELPVKIVFPRNLLGGVVPGVSASDFMMLGLGDMAIPAMLLALVLCFDHRKTRDVVNIFDLKSSKGHKYIWYALPGYAIGLVAALAAGVLTHSPQPALLYLVPSTLGPVIFMSWRRKDLAELWEGPALSNPIEKSHEIEI</sequence>
<keyword id="KW-0967">Endosome</keyword>
<keyword id="KW-0378">Hydrolase</keyword>
<keyword id="KW-0472">Membrane</keyword>
<keyword id="KW-0645">Protease</keyword>
<keyword id="KW-1185">Reference proteome</keyword>
<keyword id="KW-0812">Transmembrane</keyword>
<keyword id="KW-1133">Transmembrane helix</keyword>
<reference key="1">
    <citation type="journal article" date="1999" name="Nature">
        <title>Sequence and analysis of chromosome 4 of the plant Arabidopsis thaliana.</title>
        <authorList>
            <person name="Mayer K.F.X."/>
            <person name="Schueller C."/>
            <person name="Wambutt R."/>
            <person name="Murphy G."/>
            <person name="Volckaert G."/>
            <person name="Pohl T."/>
            <person name="Duesterhoeft A."/>
            <person name="Stiekema W."/>
            <person name="Entian K.-D."/>
            <person name="Terryn N."/>
            <person name="Harris B."/>
            <person name="Ansorge W."/>
            <person name="Brandt P."/>
            <person name="Grivell L.A."/>
            <person name="Rieger M."/>
            <person name="Weichselgartner M."/>
            <person name="de Simone V."/>
            <person name="Obermaier B."/>
            <person name="Mache R."/>
            <person name="Mueller M."/>
            <person name="Kreis M."/>
            <person name="Delseny M."/>
            <person name="Puigdomenech P."/>
            <person name="Watson M."/>
            <person name="Schmidtheini T."/>
            <person name="Reichert B."/>
            <person name="Portetelle D."/>
            <person name="Perez-Alonso M."/>
            <person name="Boutry M."/>
            <person name="Bancroft I."/>
            <person name="Vos P."/>
            <person name="Hoheisel J."/>
            <person name="Zimmermann W."/>
            <person name="Wedler H."/>
            <person name="Ridley P."/>
            <person name="Langham S.-A."/>
            <person name="McCullagh B."/>
            <person name="Bilham L."/>
            <person name="Robben J."/>
            <person name="van der Schueren J."/>
            <person name="Grymonprez B."/>
            <person name="Chuang Y.-J."/>
            <person name="Vandenbussche F."/>
            <person name="Braeken M."/>
            <person name="Weltjens I."/>
            <person name="Voet M."/>
            <person name="Bastiaens I."/>
            <person name="Aert R."/>
            <person name="Defoor E."/>
            <person name="Weitzenegger T."/>
            <person name="Bothe G."/>
            <person name="Ramsperger U."/>
            <person name="Hilbert H."/>
            <person name="Braun M."/>
            <person name="Holzer E."/>
            <person name="Brandt A."/>
            <person name="Peters S."/>
            <person name="van Staveren M."/>
            <person name="Dirkse W."/>
            <person name="Mooijman P."/>
            <person name="Klein Lankhorst R."/>
            <person name="Rose M."/>
            <person name="Hauf J."/>
            <person name="Koetter P."/>
            <person name="Berneiser S."/>
            <person name="Hempel S."/>
            <person name="Feldpausch M."/>
            <person name="Lamberth S."/>
            <person name="Van den Daele H."/>
            <person name="De Keyser A."/>
            <person name="Buysshaert C."/>
            <person name="Gielen J."/>
            <person name="Villarroel R."/>
            <person name="De Clercq R."/>
            <person name="van Montagu M."/>
            <person name="Rogers J."/>
            <person name="Cronin A."/>
            <person name="Quail M.A."/>
            <person name="Bray-Allen S."/>
            <person name="Clark L."/>
            <person name="Doggett J."/>
            <person name="Hall S."/>
            <person name="Kay M."/>
            <person name="Lennard N."/>
            <person name="McLay K."/>
            <person name="Mayes R."/>
            <person name="Pettett A."/>
            <person name="Rajandream M.A."/>
            <person name="Lyne M."/>
            <person name="Benes V."/>
            <person name="Rechmann S."/>
            <person name="Borkova D."/>
            <person name="Bloecker H."/>
            <person name="Scharfe M."/>
            <person name="Grimm M."/>
            <person name="Loehnert T.-H."/>
            <person name="Dose S."/>
            <person name="de Haan M."/>
            <person name="Maarse A.C."/>
            <person name="Schaefer M."/>
            <person name="Mueller-Auer S."/>
            <person name="Gabel C."/>
            <person name="Fuchs M."/>
            <person name="Fartmann B."/>
            <person name="Granderath K."/>
            <person name="Dauner D."/>
            <person name="Herzl A."/>
            <person name="Neumann S."/>
            <person name="Argiriou A."/>
            <person name="Vitale D."/>
            <person name="Liguori R."/>
            <person name="Piravandi E."/>
            <person name="Massenet O."/>
            <person name="Quigley F."/>
            <person name="Clabauld G."/>
            <person name="Muendlein A."/>
            <person name="Felber R."/>
            <person name="Schnabl S."/>
            <person name="Hiller R."/>
            <person name="Schmidt W."/>
            <person name="Lecharny A."/>
            <person name="Aubourg S."/>
            <person name="Chefdor F."/>
            <person name="Cooke R."/>
            <person name="Berger C."/>
            <person name="Monfort A."/>
            <person name="Casacuberta E."/>
            <person name="Gibbons T."/>
            <person name="Weber N."/>
            <person name="Vandenbol M."/>
            <person name="Bargues M."/>
            <person name="Terol J."/>
            <person name="Torres A."/>
            <person name="Perez-Perez A."/>
            <person name="Purnelle B."/>
            <person name="Bent E."/>
            <person name="Johnson S."/>
            <person name="Tacon D."/>
            <person name="Jesse T."/>
            <person name="Heijnen L."/>
            <person name="Schwarz S."/>
            <person name="Scholler P."/>
            <person name="Heber S."/>
            <person name="Francs P."/>
            <person name="Bielke C."/>
            <person name="Frishman D."/>
            <person name="Haase D."/>
            <person name="Lemcke K."/>
            <person name="Mewes H.-W."/>
            <person name="Stocker S."/>
            <person name="Zaccaria P."/>
            <person name="Bevan M."/>
            <person name="Wilson R.K."/>
            <person name="de la Bastide M."/>
            <person name="Habermann K."/>
            <person name="Parnell L."/>
            <person name="Dedhia N."/>
            <person name="Gnoj L."/>
            <person name="Schutz K."/>
            <person name="Huang E."/>
            <person name="Spiegel L."/>
            <person name="Sekhon M."/>
            <person name="Murray J."/>
            <person name="Sheet P."/>
            <person name="Cordes M."/>
            <person name="Abu-Threideh J."/>
            <person name="Stoneking T."/>
            <person name="Kalicki J."/>
            <person name="Graves T."/>
            <person name="Harmon G."/>
            <person name="Edwards J."/>
            <person name="Latreille P."/>
            <person name="Courtney L."/>
            <person name="Cloud J."/>
            <person name="Abbott A."/>
            <person name="Scott K."/>
            <person name="Johnson D."/>
            <person name="Minx P."/>
            <person name="Bentley D."/>
            <person name="Fulton B."/>
            <person name="Miller N."/>
            <person name="Greco T."/>
            <person name="Kemp K."/>
            <person name="Kramer J."/>
            <person name="Fulton L."/>
            <person name="Mardis E."/>
            <person name="Dante M."/>
            <person name="Pepin K."/>
            <person name="Hillier L.W."/>
            <person name="Nelson J."/>
            <person name="Spieth J."/>
            <person name="Ryan E."/>
            <person name="Andrews S."/>
            <person name="Geisel C."/>
            <person name="Layman D."/>
            <person name="Du H."/>
            <person name="Ali J."/>
            <person name="Berghoff A."/>
            <person name="Jones K."/>
            <person name="Drone K."/>
            <person name="Cotton M."/>
            <person name="Joshu C."/>
            <person name="Antonoiu B."/>
            <person name="Zidanic M."/>
            <person name="Strong C."/>
            <person name="Sun H."/>
            <person name="Lamar B."/>
            <person name="Yordan C."/>
            <person name="Ma P."/>
            <person name="Zhong J."/>
            <person name="Preston R."/>
            <person name="Vil D."/>
            <person name="Shekher M."/>
            <person name="Matero A."/>
            <person name="Shah R."/>
            <person name="Swaby I.K."/>
            <person name="O'Shaughnessy A."/>
            <person name="Rodriguez M."/>
            <person name="Hoffman J."/>
            <person name="Till S."/>
            <person name="Granat S."/>
            <person name="Shohdy N."/>
            <person name="Hasegawa A."/>
            <person name="Hameed A."/>
            <person name="Lodhi M."/>
            <person name="Johnson A."/>
            <person name="Chen E."/>
            <person name="Marra M.A."/>
            <person name="Martienssen R."/>
            <person name="McCombie W.R."/>
        </authorList>
    </citation>
    <scope>NUCLEOTIDE SEQUENCE [LARGE SCALE GENOMIC DNA]</scope>
    <source>
        <strain>cv. Columbia</strain>
    </source>
</reference>
<reference key="2">
    <citation type="journal article" date="2017" name="Plant J.">
        <title>Araport11: a complete reannotation of the Arabidopsis thaliana reference genome.</title>
        <authorList>
            <person name="Cheng C.Y."/>
            <person name="Krishnakumar V."/>
            <person name="Chan A.P."/>
            <person name="Thibaud-Nissen F."/>
            <person name="Schobel S."/>
            <person name="Town C.D."/>
        </authorList>
    </citation>
    <scope>GENOME REANNOTATION</scope>
    <source>
        <strain>cv. Columbia</strain>
    </source>
</reference>
<reference key="3">
    <citation type="journal article" date="2003" name="Science">
        <title>Empirical analysis of transcriptional activity in the Arabidopsis genome.</title>
        <authorList>
            <person name="Yamada K."/>
            <person name="Lim J."/>
            <person name="Dale J.M."/>
            <person name="Chen H."/>
            <person name="Shinn P."/>
            <person name="Palm C.J."/>
            <person name="Southwick A.M."/>
            <person name="Wu H.C."/>
            <person name="Kim C.J."/>
            <person name="Nguyen M."/>
            <person name="Pham P.K."/>
            <person name="Cheuk R.F."/>
            <person name="Karlin-Newmann G."/>
            <person name="Liu S.X."/>
            <person name="Lam B."/>
            <person name="Sakano H."/>
            <person name="Wu T."/>
            <person name="Yu G."/>
            <person name="Miranda M."/>
            <person name="Quach H.L."/>
            <person name="Tripp M."/>
            <person name="Chang C.H."/>
            <person name="Lee J.M."/>
            <person name="Toriumi M.J."/>
            <person name="Chan M.M."/>
            <person name="Tang C.C."/>
            <person name="Onodera C.S."/>
            <person name="Deng J.M."/>
            <person name="Akiyama K."/>
            <person name="Ansari Y."/>
            <person name="Arakawa T."/>
            <person name="Banh J."/>
            <person name="Banno F."/>
            <person name="Bowser L."/>
            <person name="Brooks S.Y."/>
            <person name="Carninci P."/>
            <person name="Chao Q."/>
            <person name="Choy N."/>
            <person name="Enju A."/>
            <person name="Goldsmith A.D."/>
            <person name="Gurjal M."/>
            <person name="Hansen N.F."/>
            <person name="Hayashizaki Y."/>
            <person name="Johnson-Hopson C."/>
            <person name="Hsuan V.W."/>
            <person name="Iida K."/>
            <person name="Karnes M."/>
            <person name="Khan S."/>
            <person name="Koesema E."/>
            <person name="Ishida J."/>
            <person name="Jiang P.X."/>
            <person name="Jones T."/>
            <person name="Kawai J."/>
            <person name="Kamiya A."/>
            <person name="Meyers C."/>
            <person name="Nakajima M."/>
            <person name="Narusaka M."/>
            <person name="Seki M."/>
            <person name="Sakurai T."/>
            <person name="Satou M."/>
            <person name="Tamse R."/>
            <person name="Vaysberg M."/>
            <person name="Wallender E.K."/>
            <person name="Wong C."/>
            <person name="Yamamura Y."/>
            <person name="Yuan S."/>
            <person name="Shinozaki K."/>
            <person name="Davis R.W."/>
            <person name="Theologis A."/>
            <person name="Ecker J.R."/>
        </authorList>
    </citation>
    <scope>NUCLEOTIDE SEQUENCE [LARGE SCALE MRNA]</scope>
    <source>
        <strain>cv. Columbia</strain>
    </source>
</reference>
<reference key="4">
    <citation type="journal article" date="2008" name="FEBS J.">
        <title>Signal peptide peptidase and its homologs in Arabidopsis thaliana - plant tissue-specific expression and distinct subcellular localization.</title>
        <authorList>
            <person name="Tamura T."/>
            <person name="Asakura T."/>
            <person name="Uemura T."/>
            <person name="Ueda T."/>
            <person name="Terauchi K."/>
            <person name="Misaka T."/>
            <person name="Abe K."/>
        </authorList>
    </citation>
    <scope>GENE FAMILY</scope>
    <scope>NOMENCLATURE</scope>
    <scope>TISSUE SPECIFICITY</scope>
    <scope>DEVELOPMENTAL STAGE</scope>
    <scope>SUBCELLULAR LOCATION</scope>
</reference>
<dbReference type="EC" id="3.4.23.-"/>
<dbReference type="EMBL" id="AL035678">
    <property type="protein sequence ID" value="CAB38799.1"/>
    <property type="status" value="ALT_SEQ"/>
    <property type="molecule type" value="Genomic_DNA"/>
</dbReference>
<dbReference type="EMBL" id="AL161583">
    <property type="protein sequence ID" value="CAB80058.1"/>
    <property type="status" value="ALT_SEQ"/>
    <property type="molecule type" value="Genomic_DNA"/>
</dbReference>
<dbReference type="EMBL" id="CP002687">
    <property type="protein sequence ID" value="AEE86221.1"/>
    <property type="molecule type" value="Genomic_DNA"/>
</dbReference>
<dbReference type="EMBL" id="AY058181">
    <property type="protein sequence ID" value="AAL25595.1"/>
    <property type="molecule type" value="mRNA"/>
</dbReference>
<dbReference type="EMBL" id="BT000484">
    <property type="protein sequence ID" value="AAN18053.1"/>
    <property type="molecule type" value="mRNA"/>
</dbReference>
<dbReference type="PIR" id="T05992">
    <property type="entry name" value="T05992"/>
</dbReference>
<dbReference type="RefSeq" id="NP_567918.1">
    <property type="nucleotide sequence ID" value="NM_119495.3"/>
</dbReference>
<dbReference type="FunCoup" id="Q93Z32">
    <property type="interactions" value="3943"/>
</dbReference>
<dbReference type="STRING" id="3702.Q93Z32"/>
<dbReference type="MEROPS" id="A22.A14"/>
<dbReference type="PaxDb" id="3702-AT4G33410.1"/>
<dbReference type="ProteomicsDB" id="234560"/>
<dbReference type="EnsemblPlants" id="AT4G33410.1">
    <property type="protein sequence ID" value="AT4G33410.1"/>
    <property type="gene ID" value="AT4G33410"/>
</dbReference>
<dbReference type="GeneID" id="829478"/>
<dbReference type="Gramene" id="AT4G33410.1">
    <property type="protein sequence ID" value="AT4G33410.1"/>
    <property type="gene ID" value="AT4G33410"/>
</dbReference>
<dbReference type="KEGG" id="ath:AT4G33410"/>
<dbReference type="Araport" id="AT4G33410"/>
<dbReference type="TAIR" id="AT4G33410">
    <property type="gene designation" value="SPPL1"/>
</dbReference>
<dbReference type="eggNOG" id="KOG2443">
    <property type="taxonomic scope" value="Eukaryota"/>
</dbReference>
<dbReference type="HOGENOM" id="CLU_061449_0_0_1"/>
<dbReference type="InParanoid" id="Q93Z32"/>
<dbReference type="OMA" id="VDYQWAY"/>
<dbReference type="OrthoDB" id="29661at2759"/>
<dbReference type="PhylomeDB" id="Q93Z32"/>
<dbReference type="PRO" id="PR:Q93Z32"/>
<dbReference type="Proteomes" id="UP000006548">
    <property type="component" value="Chromosome 4"/>
</dbReference>
<dbReference type="ExpressionAtlas" id="Q93Z32">
    <property type="expression patterns" value="baseline and differential"/>
</dbReference>
<dbReference type="GO" id="GO:0005768">
    <property type="term" value="C:endosome"/>
    <property type="evidence" value="ECO:0000314"/>
    <property type="project" value="TAIR"/>
</dbReference>
<dbReference type="GO" id="GO:0010008">
    <property type="term" value="C:endosome membrane"/>
    <property type="evidence" value="ECO:0007669"/>
    <property type="project" value="UniProtKB-SubCell"/>
</dbReference>
<dbReference type="GO" id="GO:0005794">
    <property type="term" value="C:Golgi apparatus"/>
    <property type="evidence" value="ECO:0007005"/>
    <property type="project" value="TAIR"/>
</dbReference>
<dbReference type="GO" id="GO:0005802">
    <property type="term" value="C:trans-Golgi network"/>
    <property type="evidence" value="ECO:0007005"/>
    <property type="project" value="TAIR"/>
</dbReference>
<dbReference type="GO" id="GO:0042500">
    <property type="term" value="F:aspartic endopeptidase activity, intramembrane cleaving"/>
    <property type="evidence" value="ECO:0007669"/>
    <property type="project" value="InterPro"/>
</dbReference>
<dbReference type="GO" id="GO:0006508">
    <property type="term" value="P:proteolysis"/>
    <property type="evidence" value="ECO:0007669"/>
    <property type="project" value="UniProtKB-KW"/>
</dbReference>
<dbReference type="InterPro" id="IPR007369">
    <property type="entry name" value="Peptidase_A22B_SPP"/>
</dbReference>
<dbReference type="InterPro" id="IPR006639">
    <property type="entry name" value="Preselin/SPP"/>
</dbReference>
<dbReference type="PANTHER" id="PTHR12174">
    <property type="entry name" value="SIGNAL PEPTIDE PEPTIDASE"/>
    <property type="match status" value="1"/>
</dbReference>
<dbReference type="PANTHER" id="PTHR12174:SF22">
    <property type="entry name" value="SIGNAL PEPTIDE PEPTIDASE-LIKE 3"/>
    <property type="match status" value="1"/>
</dbReference>
<dbReference type="Pfam" id="PF04258">
    <property type="entry name" value="Peptidase_A22B"/>
    <property type="match status" value="1"/>
</dbReference>
<dbReference type="SMART" id="SM00730">
    <property type="entry name" value="PSN"/>
    <property type="match status" value="1"/>
</dbReference>
<accession>Q93Z32</accession>
<accession>Q9SZB8</accession>
<organism>
    <name type="scientific">Arabidopsis thaliana</name>
    <name type="common">Mouse-ear cress</name>
    <dbReference type="NCBI Taxonomy" id="3702"/>
    <lineage>
        <taxon>Eukaryota</taxon>
        <taxon>Viridiplantae</taxon>
        <taxon>Streptophyta</taxon>
        <taxon>Embryophyta</taxon>
        <taxon>Tracheophyta</taxon>
        <taxon>Spermatophyta</taxon>
        <taxon>Magnoliopsida</taxon>
        <taxon>eudicotyledons</taxon>
        <taxon>Gunneridae</taxon>
        <taxon>Pentapetalae</taxon>
        <taxon>rosids</taxon>
        <taxon>malvids</taxon>
        <taxon>Brassicales</taxon>
        <taxon>Brassicaceae</taxon>
        <taxon>Camelineae</taxon>
        <taxon>Arabidopsis</taxon>
    </lineage>
</organism>
<name>SIPL1_ARATH</name>
<gene>
    <name type="primary">SPPL1</name>
    <name type="ordered locus">At4g33410</name>
    <name type="ORF">F17M5.170</name>
</gene>
<comment type="function">
    <text evidence="1">Intramembrane-cleaving aspartic protease (I-CLiP) that cleaves type II membrane signal peptides in the hydrophobic plane of the membrane.</text>
</comment>
<comment type="subcellular location">
    <subcellularLocation>
        <location evidence="3">Endosome membrane</location>
        <topology evidence="3">Multi-pass membrane protein</topology>
    </subcellularLocation>
</comment>
<comment type="tissue specificity">
    <text evidence="3">Ubiquitous.</text>
</comment>
<comment type="developmental stage">
    <text evidence="3">Expressed in the shoot meristem and root epidermal cells in germinating seeds.</text>
</comment>
<comment type="domain">
    <text evidence="1">The first transmembrane domain may act as a type I signal anchor. The PAL motif is required for normal active site conformation.</text>
</comment>
<comment type="similarity">
    <text evidence="4">Belongs to the peptidase A22B family.</text>
</comment>
<comment type="sequence caution" evidence="4">
    <conflict type="erroneous gene model prediction">
        <sequence resource="EMBL-CDS" id="CAB38799"/>
    </conflict>
</comment>
<comment type="sequence caution" evidence="4">
    <conflict type="erroneous gene model prediction">
        <sequence resource="EMBL-CDS" id="CAB80058"/>
    </conflict>
</comment>
<evidence type="ECO:0000250" key="1"/>
<evidence type="ECO:0000255" key="2"/>
<evidence type="ECO:0000269" key="3">
    <source>
    </source>
</evidence>
<evidence type="ECO:0000305" key="4"/>